<gene>
    <name type="primary">pepS</name>
</gene>
<feature type="chain" id="PRO_0000079177" description="Aminopeptidase PepS">
    <location>
        <begin position="1"/>
        <end position="413"/>
    </location>
</feature>
<feature type="binding site" evidence="1">
    <location>
        <position position="253"/>
    </location>
    <ligand>
        <name>a divalent metal cation</name>
        <dbReference type="ChEBI" id="CHEBI:60240"/>
        <label>1</label>
    </ligand>
</feature>
<feature type="binding site" evidence="1">
    <location>
        <position position="319"/>
    </location>
    <ligand>
        <name>a divalent metal cation</name>
        <dbReference type="ChEBI" id="CHEBI:60240"/>
        <label>1</label>
    </ligand>
</feature>
<feature type="binding site" evidence="1">
    <location>
        <position position="319"/>
    </location>
    <ligand>
        <name>a divalent metal cation</name>
        <dbReference type="ChEBI" id="CHEBI:60240"/>
        <label>2</label>
    </ligand>
</feature>
<feature type="binding site" evidence="1">
    <location>
        <position position="343"/>
    </location>
    <ligand>
        <name>a divalent metal cation</name>
        <dbReference type="ChEBI" id="CHEBI:60240"/>
        <label>1</label>
    </ligand>
</feature>
<feature type="binding site" evidence="1">
    <location>
        <position position="343"/>
    </location>
    <ligand>
        <name>a divalent metal cation</name>
        <dbReference type="ChEBI" id="CHEBI:60240"/>
        <label>2</label>
    </ligand>
</feature>
<feature type="binding site" evidence="1">
    <location>
        <position position="348"/>
    </location>
    <ligand>
        <name>a divalent metal cation</name>
        <dbReference type="ChEBI" id="CHEBI:60240"/>
        <label>1</label>
    </ligand>
</feature>
<feature type="binding site" evidence="1">
    <location>
        <position position="381"/>
    </location>
    <ligand>
        <name>a divalent metal cation</name>
        <dbReference type="ChEBI" id="CHEBI:60240"/>
        <label>2</label>
    </ligand>
</feature>
<feature type="binding site" evidence="1">
    <location>
        <position position="383"/>
    </location>
    <ligand>
        <name>a divalent metal cation</name>
        <dbReference type="ChEBI" id="CHEBI:60240"/>
        <label>2</label>
    </ligand>
</feature>
<comment type="function">
    <text evidence="2">Exhibits a high specificity towards peptides possessing arginine or aromatic amino acids at the N-terminus. Could be involved both in bacterial growth by supplying amino acids.</text>
</comment>
<comment type="cofactor">
    <cofactor evidence="2">
        <name>Co(2+)</name>
        <dbReference type="ChEBI" id="CHEBI:48828"/>
    </cofactor>
    <cofactor evidence="2">
        <name>Zn(2+)</name>
        <dbReference type="ChEBI" id="CHEBI:29105"/>
    </cofactor>
    <cofactor evidence="2">
        <name>Mg(2+)</name>
        <dbReference type="ChEBI" id="CHEBI:18420"/>
    </cofactor>
    <text evidence="1 2">Binds 2 divalent metal cations per subunit (By similarity). Can use cobalt, zinc, and possibly also magnesium ions (PubMed:10406960).</text>
</comment>
<comment type="biophysicochemical properties">
    <phDependence>
        <text evidence="2">Optimum pH is 7.5-8.5.</text>
    </phDependence>
    <temperatureDependence>
        <text evidence="2">Optimum temperature is 55 degrees Celsius.</text>
    </temperatureDependence>
</comment>
<comment type="subunit">
    <text evidence="2">Monomer.</text>
</comment>
<comment type="similarity">
    <text evidence="3">Belongs to the peptidase M29 family.</text>
</comment>
<dbReference type="EC" id="3.4.11.-" evidence="2"/>
<dbReference type="EMBL" id="AF102860">
    <property type="protein sequence ID" value="AAD28348.1"/>
    <property type="molecule type" value="Genomic_DNA"/>
</dbReference>
<dbReference type="RefSeq" id="WP_014727288.1">
    <property type="nucleotide sequence ID" value="NZ_WMLD01000019.1"/>
</dbReference>
<dbReference type="SMR" id="Q9X4A7"/>
<dbReference type="MEROPS" id="M29.004"/>
<dbReference type="KEGG" id="ag:AAD28348"/>
<dbReference type="eggNOG" id="COG2309">
    <property type="taxonomic scope" value="Bacteria"/>
</dbReference>
<dbReference type="GO" id="GO:0004177">
    <property type="term" value="F:aminopeptidase activity"/>
    <property type="evidence" value="ECO:0007669"/>
    <property type="project" value="UniProtKB-KW"/>
</dbReference>
<dbReference type="GO" id="GO:0046872">
    <property type="term" value="F:metal ion binding"/>
    <property type="evidence" value="ECO:0007669"/>
    <property type="project" value="UniProtKB-KW"/>
</dbReference>
<dbReference type="GO" id="GO:0008237">
    <property type="term" value="F:metallopeptidase activity"/>
    <property type="evidence" value="ECO:0007669"/>
    <property type="project" value="UniProtKB-KW"/>
</dbReference>
<dbReference type="GO" id="GO:0006508">
    <property type="term" value="P:proteolysis"/>
    <property type="evidence" value="ECO:0007669"/>
    <property type="project" value="UniProtKB-KW"/>
</dbReference>
<dbReference type="Gene3D" id="3.40.1830.10">
    <property type="entry name" value="Thermophilic metalloprotease (M29)"/>
    <property type="match status" value="1"/>
</dbReference>
<dbReference type="InterPro" id="IPR052170">
    <property type="entry name" value="M29_Exopeptidase"/>
</dbReference>
<dbReference type="InterPro" id="IPR035097">
    <property type="entry name" value="M29_N-terminal"/>
</dbReference>
<dbReference type="InterPro" id="IPR000787">
    <property type="entry name" value="Peptidase_M29"/>
</dbReference>
<dbReference type="PANTHER" id="PTHR34448">
    <property type="entry name" value="AMINOPEPTIDASE"/>
    <property type="match status" value="1"/>
</dbReference>
<dbReference type="PANTHER" id="PTHR34448:SF3">
    <property type="entry name" value="AMINOPEPTIDASE AMPS"/>
    <property type="match status" value="1"/>
</dbReference>
<dbReference type="Pfam" id="PF02073">
    <property type="entry name" value="Peptidase_M29"/>
    <property type="match status" value="1"/>
</dbReference>
<dbReference type="PRINTS" id="PR00919">
    <property type="entry name" value="THERMOPTASE"/>
</dbReference>
<dbReference type="SUPFAM" id="SSF144052">
    <property type="entry name" value="Thermophilic metalloprotease-like"/>
    <property type="match status" value="1"/>
</dbReference>
<protein>
    <recommendedName>
        <fullName>Aminopeptidase PepS</fullName>
        <ecNumber evidence="2">3.4.11.-</ecNumber>
    </recommendedName>
</protein>
<keyword id="KW-0031">Aminopeptidase</keyword>
<keyword id="KW-0903">Direct protein sequencing</keyword>
<keyword id="KW-0378">Hydrolase</keyword>
<keyword id="KW-0479">Metal-binding</keyword>
<keyword id="KW-0482">Metalloprotease</keyword>
<keyword id="KW-0645">Protease</keyword>
<accession>Q9X4A7</accession>
<reference key="1">
    <citation type="journal article" date="1999" name="Eur. J. Biochem.">
        <title>PepS from Streptococcus thermophilus. A new member of the aminopeptidase T family of thermophilic bacteria.</title>
        <authorList>
            <person name="Fernandez-Espla M.D."/>
            <person name="Rul F."/>
        </authorList>
    </citation>
    <scope>NUCLEOTIDE SEQUENCE [GENOMIC DNA]</scope>
    <scope>PARTIAL PROTEIN SEQUENCE</scope>
    <scope>FUNCTION</scope>
    <scope>CATALYTIC ACTIVITY</scope>
    <scope>COFACTOR</scope>
    <scope>BIOPHYSICOCHEMICAL PROPERTIES</scope>
    <source>
        <strain>CNRZ 302</strain>
    </source>
</reference>
<sequence>MVLPNFKENLEKYAKLLVTNGINVQPGHTVALSIDVEQAELAHLLVKEAYALGAAEVIVQWSDDTINRERFLHAEMNRIEEVPAYKKAEMEYLLEKKASRLGVRSSDPDAFNGVAPERLSAHAKAIGAAFKPMQVATQSNKVSWTVAAAAGKEWAKKVFPNASSDEEAVDLLWNQIFKTCRVYEKDPVRAWKEHADRLDAKARILNEAQFSALHYTAPGTDLTLGLPKNHVWESAGAINAQGESFLPNMPTEEVFTAPDFRRAYGYVSSTKPLSYNGNIIEGIKVTFKDGEIVDITADQGEKVMKNLVFNNNGARALGECALVPDSSPISQSGITFFNTLFDENASNHLAIGAAYATSVEGGADMTEEELKAAGLNRSDVHVDFIIGSNQMNIDGIHHDGSRVPIFRNGDWVI</sequence>
<evidence type="ECO:0000250" key="1">
    <source>
        <dbReference type="UniProtKB" id="P42778"/>
    </source>
</evidence>
<evidence type="ECO:0000269" key="2">
    <source>
    </source>
</evidence>
<evidence type="ECO:0000305" key="3"/>
<name>PEPS_STRTR</name>
<proteinExistence type="evidence at protein level"/>
<organism>
    <name type="scientific">Streptococcus thermophilus</name>
    <dbReference type="NCBI Taxonomy" id="1308"/>
    <lineage>
        <taxon>Bacteria</taxon>
        <taxon>Bacillati</taxon>
        <taxon>Bacillota</taxon>
        <taxon>Bacilli</taxon>
        <taxon>Lactobacillales</taxon>
        <taxon>Streptococcaceae</taxon>
        <taxon>Streptococcus</taxon>
    </lineage>
</organism>